<sequence length="415" mass="44628">MTQNSAENPFPVRAVAIRVAGWIDKLGAVWVEGQLAQITMRPDAKTVFMVLRDPAADMSLTVTCSRDLVLSAPVKLAEGVQVVVCGKPSFYTGRGTFSLRLSEIRAVGIGELLARIDRLRRLLDAEGLFDPRLKRPIPYLPNMIGLITGRASAAERDVTTVASARWPAARFAVRNVAVQGPNAVGQIVEALRELDRDPDVDVIVLARGGGSVEDLLPFSDETLCRAIAACRTPVVSAVGHEPDNPLCDLVVDLRAATPTDAAKKVVPDTAAEQRLIDDLRRRSAQALRNWVSREQRAVAQLRSRPVLADPMTMVSVRAEEVHRARSTLRRNLTLMVAAETERIGHLAARLATLGPAATLARGYAIVQTVAQTGPEGGSEPQVLRSVHDAPEGTKLRVRVADGALAAVSEGQTNGL</sequence>
<reference key="1">
    <citation type="journal article" date="2009" name="Vaccine">
        <title>Whole genome sequence analysis of Mycobacterium bovis bacillus Calmette-Guerin (BCG) Tokyo 172: a comparative study of BCG vaccine substrains.</title>
        <authorList>
            <person name="Seki M."/>
            <person name="Honda I."/>
            <person name="Fujita I."/>
            <person name="Yano I."/>
            <person name="Yamamoto S."/>
            <person name="Koyama A."/>
        </authorList>
    </citation>
    <scope>NUCLEOTIDE SEQUENCE [LARGE SCALE GENOMIC DNA]</scope>
    <source>
        <strain>BCG / Tokyo 172 / ATCC 35737 / TMC 1019</strain>
    </source>
</reference>
<organism>
    <name type="scientific">Mycobacterium bovis (strain BCG / Tokyo 172 / ATCC 35737 / TMC 1019)</name>
    <dbReference type="NCBI Taxonomy" id="561275"/>
    <lineage>
        <taxon>Bacteria</taxon>
        <taxon>Bacillati</taxon>
        <taxon>Actinomycetota</taxon>
        <taxon>Actinomycetes</taxon>
        <taxon>Mycobacteriales</taxon>
        <taxon>Mycobacteriaceae</taxon>
        <taxon>Mycobacterium</taxon>
        <taxon>Mycobacterium tuberculosis complex</taxon>
    </lineage>
</organism>
<proteinExistence type="inferred from homology"/>
<feature type="chain" id="PRO_1000200673" description="Exodeoxyribonuclease 7 large subunit">
    <location>
        <begin position="1"/>
        <end position="415"/>
    </location>
</feature>
<evidence type="ECO:0000255" key="1">
    <source>
        <dbReference type="HAMAP-Rule" id="MF_00378"/>
    </source>
</evidence>
<protein>
    <recommendedName>
        <fullName evidence="1">Exodeoxyribonuclease 7 large subunit</fullName>
        <ecNumber evidence="1">3.1.11.6</ecNumber>
    </recommendedName>
    <alternativeName>
        <fullName evidence="1">Exodeoxyribonuclease VII large subunit</fullName>
        <shortName evidence="1">Exonuclease VII large subunit</shortName>
    </alternativeName>
</protein>
<gene>
    <name evidence="1" type="primary">xseA</name>
    <name type="ordered locus">JTY_1141</name>
</gene>
<dbReference type="EC" id="3.1.11.6" evidence="1"/>
<dbReference type="EMBL" id="AP010918">
    <property type="protein sequence ID" value="BAH25431.1"/>
    <property type="molecule type" value="Genomic_DNA"/>
</dbReference>
<dbReference type="RefSeq" id="WP_003405846.1">
    <property type="nucleotide sequence ID" value="NZ_CP014566.1"/>
</dbReference>
<dbReference type="SMR" id="C1AMA2"/>
<dbReference type="GeneID" id="45425082"/>
<dbReference type="KEGG" id="mbt:JTY_1141"/>
<dbReference type="HOGENOM" id="CLU_023625_2_1_11"/>
<dbReference type="GO" id="GO:0005737">
    <property type="term" value="C:cytoplasm"/>
    <property type="evidence" value="ECO:0007669"/>
    <property type="project" value="UniProtKB-SubCell"/>
</dbReference>
<dbReference type="GO" id="GO:0009318">
    <property type="term" value="C:exodeoxyribonuclease VII complex"/>
    <property type="evidence" value="ECO:0007669"/>
    <property type="project" value="InterPro"/>
</dbReference>
<dbReference type="GO" id="GO:0008855">
    <property type="term" value="F:exodeoxyribonuclease VII activity"/>
    <property type="evidence" value="ECO:0007669"/>
    <property type="project" value="UniProtKB-UniRule"/>
</dbReference>
<dbReference type="GO" id="GO:0003676">
    <property type="term" value="F:nucleic acid binding"/>
    <property type="evidence" value="ECO:0007669"/>
    <property type="project" value="InterPro"/>
</dbReference>
<dbReference type="GO" id="GO:0006308">
    <property type="term" value="P:DNA catabolic process"/>
    <property type="evidence" value="ECO:0007669"/>
    <property type="project" value="UniProtKB-UniRule"/>
</dbReference>
<dbReference type="CDD" id="cd04489">
    <property type="entry name" value="ExoVII_LU_OBF"/>
    <property type="match status" value="1"/>
</dbReference>
<dbReference type="HAMAP" id="MF_00378">
    <property type="entry name" value="Exonuc_7_L"/>
    <property type="match status" value="1"/>
</dbReference>
<dbReference type="InterPro" id="IPR003753">
    <property type="entry name" value="Exonuc_VII_L"/>
</dbReference>
<dbReference type="InterPro" id="IPR020579">
    <property type="entry name" value="Exonuc_VII_lsu_C"/>
</dbReference>
<dbReference type="InterPro" id="IPR025824">
    <property type="entry name" value="OB-fold_nuc-bd_dom"/>
</dbReference>
<dbReference type="NCBIfam" id="TIGR00237">
    <property type="entry name" value="xseA"/>
    <property type="match status" value="1"/>
</dbReference>
<dbReference type="PANTHER" id="PTHR30008">
    <property type="entry name" value="EXODEOXYRIBONUCLEASE 7 LARGE SUBUNIT"/>
    <property type="match status" value="1"/>
</dbReference>
<dbReference type="PANTHER" id="PTHR30008:SF0">
    <property type="entry name" value="EXODEOXYRIBONUCLEASE 7 LARGE SUBUNIT"/>
    <property type="match status" value="1"/>
</dbReference>
<dbReference type="Pfam" id="PF02601">
    <property type="entry name" value="Exonuc_VII_L"/>
    <property type="match status" value="1"/>
</dbReference>
<dbReference type="Pfam" id="PF13742">
    <property type="entry name" value="tRNA_anti_2"/>
    <property type="match status" value="1"/>
</dbReference>
<name>EX7L_MYCBT</name>
<keyword id="KW-0963">Cytoplasm</keyword>
<keyword id="KW-0269">Exonuclease</keyword>
<keyword id="KW-0378">Hydrolase</keyword>
<keyword id="KW-0540">Nuclease</keyword>
<accession>C1AMA2</accession>
<comment type="function">
    <text evidence="1">Bidirectionally degrades single-stranded DNA into large acid-insoluble oligonucleotides, which are then degraded further into small acid-soluble oligonucleotides.</text>
</comment>
<comment type="catalytic activity">
    <reaction evidence="1">
        <text>Exonucleolytic cleavage in either 5'- to 3'- or 3'- to 5'-direction to yield nucleoside 5'-phosphates.</text>
        <dbReference type="EC" id="3.1.11.6"/>
    </reaction>
</comment>
<comment type="subunit">
    <text evidence="1">Heterooligomer composed of large and small subunits.</text>
</comment>
<comment type="subcellular location">
    <subcellularLocation>
        <location evidence="1">Cytoplasm</location>
    </subcellularLocation>
</comment>
<comment type="similarity">
    <text evidence="1">Belongs to the XseA family.</text>
</comment>